<keyword id="KW-0165">Cleavage on pair of basic residues</keyword>
<keyword id="KW-0202">Cytokine</keyword>
<keyword id="KW-1015">Disulfide bond</keyword>
<keyword id="KW-0325">Glycoprotein</keyword>
<keyword id="KW-0339">Growth factor</keyword>
<keyword id="KW-0964">Secreted</keyword>
<keyword id="KW-0732">Signal</keyword>
<comment type="function">
    <text evidence="1">Acts specifically as a negative regulator of skeletal muscle growth.</text>
</comment>
<comment type="subunit">
    <text evidence="1">Homodimer; disulfide-linked.</text>
</comment>
<comment type="subcellular location">
    <subcellularLocation>
        <location evidence="1">Secreted</location>
    </subcellularLocation>
</comment>
<comment type="similarity">
    <text evidence="4">Belongs to the TGF-beta family.</text>
</comment>
<accession>Q8AVB2</accession>
<reference key="1">
    <citation type="submission" date="2001-08" db="EMBL/GenBank/DDBJ databases">
        <title>Expression of myostatin is not altered in growth-selected lines of poultry exhibiting myofiber hyper- and hypoplasia.</title>
        <authorList>
            <person name="Mott I.W."/>
            <person name="Ivarie R.D."/>
        </authorList>
    </citation>
    <scope>NUCLEOTIDE SEQUENCE [MRNA]</scope>
    <source>
        <tissue>Pectoralis muscle</tissue>
    </source>
</reference>
<proteinExistence type="evidence at transcript level"/>
<dbReference type="EMBL" id="AF407340">
    <property type="protein sequence ID" value="AAN63522.1"/>
    <property type="molecule type" value="mRNA"/>
</dbReference>
<dbReference type="SMR" id="Q8AVB2"/>
<dbReference type="GlyCosmos" id="Q8AVB2">
    <property type="glycosylation" value="1 site, No reported glycans"/>
</dbReference>
<dbReference type="GO" id="GO:0005615">
    <property type="term" value="C:extracellular space"/>
    <property type="evidence" value="ECO:0000250"/>
    <property type="project" value="AgBase"/>
</dbReference>
<dbReference type="GO" id="GO:0005125">
    <property type="term" value="F:cytokine activity"/>
    <property type="evidence" value="ECO:0007669"/>
    <property type="project" value="UniProtKB-KW"/>
</dbReference>
<dbReference type="GO" id="GO:0008083">
    <property type="term" value="F:growth factor activity"/>
    <property type="evidence" value="ECO:0007669"/>
    <property type="project" value="UniProtKB-KW"/>
</dbReference>
<dbReference type="GO" id="GO:0033002">
    <property type="term" value="P:muscle cell proliferation"/>
    <property type="evidence" value="ECO:0000250"/>
    <property type="project" value="AgBase"/>
</dbReference>
<dbReference type="GO" id="GO:2000818">
    <property type="term" value="P:negative regulation of myoblast proliferation"/>
    <property type="evidence" value="ECO:0000250"/>
    <property type="project" value="AgBase"/>
</dbReference>
<dbReference type="GO" id="GO:1902725">
    <property type="term" value="P:negative regulation of satellite cell differentiation"/>
    <property type="evidence" value="ECO:0000250"/>
    <property type="project" value="AgBase"/>
</dbReference>
<dbReference type="GO" id="GO:1902723">
    <property type="term" value="P:negative regulation of skeletal muscle satellite cell proliferation"/>
    <property type="evidence" value="ECO:0000250"/>
    <property type="project" value="AgBase"/>
</dbReference>
<dbReference type="CDD" id="cd19388">
    <property type="entry name" value="TGF_beta_GDF8"/>
    <property type="match status" value="1"/>
</dbReference>
<dbReference type="FunFam" id="2.60.120.970:FF:000001">
    <property type="entry name" value="Growth/differentiation factor 8"/>
    <property type="match status" value="1"/>
</dbReference>
<dbReference type="FunFam" id="2.10.90.10:FF:000006">
    <property type="entry name" value="growth/differentiation factor 8"/>
    <property type="match status" value="1"/>
</dbReference>
<dbReference type="Gene3D" id="2.60.120.970">
    <property type="match status" value="1"/>
</dbReference>
<dbReference type="Gene3D" id="2.10.90.10">
    <property type="entry name" value="Cystine-knot cytokines"/>
    <property type="match status" value="1"/>
</dbReference>
<dbReference type="InterPro" id="IPR029034">
    <property type="entry name" value="Cystine-knot_cytokine"/>
</dbReference>
<dbReference type="InterPro" id="IPR001839">
    <property type="entry name" value="TGF-b_C"/>
</dbReference>
<dbReference type="InterPro" id="IPR001111">
    <property type="entry name" value="TGF-b_propeptide"/>
</dbReference>
<dbReference type="InterPro" id="IPR015615">
    <property type="entry name" value="TGF-beta-rel"/>
</dbReference>
<dbReference type="InterPro" id="IPR017948">
    <property type="entry name" value="TGFb_CS"/>
</dbReference>
<dbReference type="PANTHER" id="PTHR11848:SF150">
    <property type="entry name" value="GROWTH_DIFFERENTIATION FACTOR 8"/>
    <property type="match status" value="1"/>
</dbReference>
<dbReference type="PANTHER" id="PTHR11848">
    <property type="entry name" value="TGF-BETA FAMILY"/>
    <property type="match status" value="1"/>
</dbReference>
<dbReference type="Pfam" id="PF00019">
    <property type="entry name" value="TGF_beta"/>
    <property type="match status" value="1"/>
</dbReference>
<dbReference type="Pfam" id="PF00688">
    <property type="entry name" value="TGFb_propeptide"/>
    <property type="match status" value="1"/>
</dbReference>
<dbReference type="SMART" id="SM00204">
    <property type="entry name" value="TGFB"/>
    <property type="match status" value="1"/>
</dbReference>
<dbReference type="SUPFAM" id="SSF57501">
    <property type="entry name" value="Cystine-knot cytokines"/>
    <property type="match status" value="1"/>
</dbReference>
<dbReference type="PROSITE" id="PS00250">
    <property type="entry name" value="TGF_BETA_1"/>
    <property type="match status" value="1"/>
</dbReference>
<dbReference type="PROSITE" id="PS51362">
    <property type="entry name" value="TGF_BETA_2"/>
    <property type="match status" value="1"/>
</dbReference>
<name>GDF8_COTCO</name>
<sequence length="375" mass="42775">MQKIVVYVYIYLFVQISVDPVALDGSSQPTENTEKDGLCNACTWRQNTKSSRIEAIKIQILSKLRLEQAPNISRDVIKQLLPKAPPLQELIDQYDVQRDDSSDGSLEDDDYHATTETIITMPTESDFLVQMEGKPKCCFFKFSSKIQYNKVVKAQLWIYLRQVQKPTTVFVQILRLIKPMKDGTRYTGIRSLKLDMNPGNGIWQSIDVKTVLQNWLKQPESNLGIEIKAFDENGRDLAVTFPGPGEDGLNPFLEVRVTDTPKRSRRDFGLDCDEHSTESRCCRYPLTVDFEAFGWDWIIAPKRYKANYCSGECEFVFLQKYPHTHLVHQANPRGSAGPCCTPTKMSPINMLYFNGKEQIIYGKIPAMVVDRCGCS</sequence>
<protein>
    <recommendedName>
        <fullName>Growth/differentiation factor 8</fullName>
        <shortName>GDF-8</shortName>
    </recommendedName>
    <alternativeName>
        <fullName>Myostatin</fullName>
    </alternativeName>
</protein>
<organism>
    <name type="scientific">Coturnix coturnix</name>
    <name type="common">Common quail</name>
    <name type="synonym">Tetrao coturnix</name>
    <dbReference type="NCBI Taxonomy" id="9091"/>
    <lineage>
        <taxon>Eukaryota</taxon>
        <taxon>Metazoa</taxon>
        <taxon>Chordata</taxon>
        <taxon>Craniata</taxon>
        <taxon>Vertebrata</taxon>
        <taxon>Euteleostomi</taxon>
        <taxon>Archelosauria</taxon>
        <taxon>Archosauria</taxon>
        <taxon>Dinosauria</taxon>
        <taxon>Saurischia</taxon>
        <taxon>Theropoda</taxon>
        <taxon>Coelurosauria</taxon>
        <taxon>Aves</taxon>
        <taxon>Neognathae</taxon>
        <taxon>Galloanserae</taxon>
        <taxon>Galliformes</taxon>
        <taxon>Phasianidae</taxon>
        <taxon>Perdicinae</taxon>
        <taxon>Coturnix</taxon>
    </lineage>
</organism>
<feature type="signal peptide" evidence="3">
    <location>
        <begin position="1"/>
        <end position="23"/>
    </location>
</feature>
<feature type="propeptide" id="PRO_0000247006" evidence="3">
    <location>
        <begin position="24"/>
        <end position="266"/>
    </location>
</feature>
<feature type="chain" id="PRO_0000247007" description="Growth/differentiation factor 8">
    <location>
        <begin position="267"/>
        <end position="375"/>
    </location>
</feature>
<feature type="glycosylation site" description="N-linked (GlcNAc...) asparagine" evidence="3">
    <location>
        <position position="71"/>
    </location>
</feature>
<feature type="disulfide bond" evidence="2">
    <location>
        <begin position="272"/>
        <end position="282"/>
    </location>
</feature>
<feature type="disulfide bond" evidence="1">
    <location>
        <begin position="281"/>
        <end position="340"/>
    </location>
</feature>
<feature type="disulfide bond" evidence="1">
    <location>
        <begin position="309"/>
        <end position="372"/>
    </location>
</feature>
<feature type="disulfide bond" evidence="1">
    <location>
        <begin position="313"/>
        <end position="374"/>
    </location>
</feature>
<feature type="disulfide bond" description="Interchain" evidence="1">
    <location>
        <position position="339"/>
    </location>
</feature>
<evidence type="ECO:0000250" key="1"/>
<evidence type="ECO:0000250" key="2">
    <source>
        <dbReference type="UniProtKB" id="O08689"/>
    </source>
</evidence>
<evidence type="ECO:0000255" key="3"/>
<evidence type="ECO:0000305" key="4"/>
<gene>
    <name type="primary">MSTN</name>
    <name type="synonym">GDF8</name>
</gene>